<sequence>MRACLKCKYLTNDEICPICHSPTSENWIGLLIVINPEKSEIAKKAGIDIKGKYALSVKE</sequence>
<feature type="chain" id="PRO_0000074037" description="Transcription elongation factor Spt4">
    <location>
        <begin position="1"/>
        <end position="59"/>
    </location>
</feature>
<feature type="binding site" evidence="1 2">
    <location>
        <position position="4"/>
    </location>
    <ligand>
        <name>Zn(2+)</name>
        <dbReference type="ChEBI" id="CHEBI:29105"/>
    </ligand>
</feature>
<feature type="binding site" evidence="1 2">
    <location>
        <position position="7"/>
    </location>
    <ligand>
        <name>Zn(2+)</name>
        <dbReference type="ChEBI" id="CHEBI:29105"/>
    </ligand>
</feature>
<feature type="binding site" evidence="1 2">
    <location>
        <position position="16"/>
    </location>
    <ligand>
        <name>Zn(2+)</name>
        <dbReference type="ChEBI" id="CHEBI:29105"/>
    </ligand>
</feature>
<feature type="binding site" evidence="1 2">
    <location>
        <position position="19"/>
    </location>
    <ligand>
        <name>Zn(2+)</name>
        <dbReference type="ChEBI" id="CHEBI:29105"/>
    </ligand>
</feature>
<feature type="strand" evidence="4">
    <location>
        <begin position="2"/>
        <end position="4"/>
    </location>
</feature>
<feature type="turn" evidence="4">
    <location>
        <begin position="5"/>
        <end position="7"/>
    </location>
</feature>
<feature type="strand" evidence="4">
    <location>
        <begin position="9"/>
        <end position="15"/>
    </location>
</feature>
<feature type="turn" evidence="4">
    <location>
        <begin position="17"/>
        <end position="19"/>
    </location>
</feature>
<feature type="strand" evidence="4">
    <location>
        <begin position="22"/>
        <end position="25"/>
    </location>
</feature>
<feature type="strand" evidence="4">
    <location>
        <begin position="30"/>
        <end position="34"/>
    </location>
</feature>
<feature type="turn" evidence="4">
    <location>
        <begin position="36"/>
        <end position="38"/>
    </location>
</feature>
<feature type="helix" evidence="4">
    <location>
        <begin position="40"/>
        <end position="44"/>
    </location>
</feature>
<feature type="strand" evidence="4">
    <location>
        <begin position="51"/>
        <end position="53"/>
    </location>
</feature>
<feature type="strand" evidence="4">
    <location>
        <begin position="55"/>
        <end position="57"/>
    </location>
</feature>
<accession>Q57839</accession>
<reference key="1">
    <citation type="journal article" date="1996" name="Science">
        <title>Complete genome sequence of the methanogenic archaeon, Methanococcus jannaschii.</title>
        <authorList>
            <person name="Bult C.J."/>
            <person name="White O."/>
            <person name="Olsen G.J."/>
            <person name="Zhou L."/>
            <person name="Fleischmann R.D."/>
            <person name="Sutton G.G."/>
            <person name="Blake J.A."/>
            <person name="FitzGerald L.M."/>
            <person name="Clayton R.A."/>
            <person name="Gocayne J.D."/>
            <person name="Kerlavage A.R."/>
            <person name="Dougherty B.A."/>
            <person name="Tomb J.-F."/>
            <person name="Adams M.D."/>
            <person name="Reich C.I."/>
            <person name="Overbeek R."/>
            <person name="Kirkness E.F."/>
            <person name="Weinstock K.G."/>
            <person name="Merrick J.M."/>
            <person name="Glodek A."/>
            <person name="Scott J.L."/>
            <person name="Geoghagen N.S.M."/>
            <person name="Weidman J.F."/>
            <person name="Fuhrmann J.L."/>
            <person name="Nguyen D."/>
            <person name="Utterback T.R."/>
            <person name="Kelley J.M."/>
            <person name="Peterson J.D."/>
            <person name="Sadow P.W."/>
            <person name="Hanna M.C."/>
            <person name="Cotton M.D."/>
            <person name="Roberts K.M."/>
            <person name="Hurst M.A."/>
            <person name="Kaine B.P."/>
            <person name="Borodovsky M."/>
            <person name="Klenk H.-P."/>
            <person name="Fraser C.M."/>
            <person name="Smith H.O."/>
            <person name="Woese C.R."/>
            <person name="Venter J.C."/>
        </authorList>
    </citation>
    <scope>NUCLEOTIDE SEQUENCE [LARGE SCALE GENOMIC DNA]</scope>
    <source>
        <strain>ATCC 43067 / DSM 2661 / JAL-1 / JCM 10045 / NBRC 100440</strain>
    </source>
</reference>
<reference key="2">
    <citation type="journal article" date="2010" name="Nucleic Acids Res.">
        <title>Spt4/5 stimulates transcription elongation through the RNA polymerase clamp coiled-coil motif.</title>
        <authorList>
            <person name="Hirtreiter A."/>
            <person name="Damsma G.E."/>
            <person name="Cheung A.C."/>
            <person name="Klose D."/>
            <person name="Grohmann D."/>
            <person name="Vojnic E."/>
            <person name="Martin A.C."/>
            <person name="Cramer P."/>
            <person name="Werner F."/>
        </authorList>
    </citation>
    <scope>X-RAY CRYSTALLOGRAPHY (1.90 ANGSTROMS) IN COMPLEX WITH ZINC</scope>
    <scope>FUNCTION</scope>
    <scope>SUBUNIT</scope>
</reference>
<name>SPT4_METJA</name>
<proteinExistence type="evidence at protein level"/>
<keyword id="KW-0002">3D-structure</keyword>
<keyword id="KW-0479">Metal-binding</keyword>
<keyword id="KW-1185">Reference proteome</keyword>
<keyword id="KW-0804">Transcription</keyword>
<keyword id="KW-0805">Transcription regulation</keyword>
<keyword id="KW-0862">Zinc</keyword>
<evidence type="ECO:0000255" key="1">
    <source>
        <dbReference type="HAMAP-Rule" id="MF_00949"/>
    </source>
</evidence>
<evidence type="ECO:0000269" key="2">
    <source>
    </source>
</evidence>
<evidence type="ECO:0000303" key="3">
    <source>
    </source>
</evidence>
<evidence type="ECO:0007829" key="4">
    <source>
        <dbReference type="PDB" id="3LPE"/>
    </source>
</evidence>
<comment type="function">
    <text evidence="1 2">Stimulates transcription elongation.</text>
</comment>
<comment type="subunit">
    <text evidence="1 2">Heterodimer composed of Spt4 and Spt5.</text>
</comment>
<comment type="interaction">
    <interactant intactId="EBI-15739363">
        <id>Q57839</id>
    </interactant>
    <interactant intactId="EBI-15739382">
        <id>Q57818</id>
        <label>spt5</label>
    </interactant>
    <organismsDiffer>false</organismsDiffer>
    <experiments>3</experiments>
</comment>
<comment type="similarity">
    <text evidence="1">Belongs to the archaeal Spt4 family.</text>
</comment>
<dbReference type="EMBL" id="L77117">
    <property type="protein sequence ID" value="AAB98386.1"/>
    <property type="molecule type" value="Genomic_DNA"/>
</dbReference>
<dbReference type="PIR" id="D64349">
    <property type="entry name" value="D64349"/>
</dbReference>
<dbReference type="RefSeq" id="WP_010869895.1">
    <property type="nucleotide sequence ID" value="NC_000909.1"/>
</dbReference>
<dbReference type="PDB" id="3LPE">
    <property type="method" value="X-ray"/>
    <property type="resolution" value="1.90 A"/>
    <property type="chains" value="B/D/F/H=1-59"/>
</dbReference>
<dbReference type="PDB" id="4ZN1">
    <property type="method" value="X-ray"/>
    <property type="resolution" value="2.80 A"/>
    <property type="chains" value="B=2-59"/>
</dbReference>
<dbReference type="PDB" id="4ZN3">
    <property type="method" value="X-ray"/>
    <property type="resolution" value="2.30 A"/>
    <property type="chains" value="B=2-59"/>
</dbReference>
<dbReference type="PDBsum" id="3LPE"/>
<dbReference type="PDBsum" id="4ZN1"/>
<dbReference type="PDBsum" id="4ZN3"/>
<dbReference type="SMR" id="Q57839"/>
<dbReference type="DIP" id="DIP-46332N"/>
<dbReference type="FunCoup" id="Q57839">
    <property type="interactions" value="11"/>
</dbReference>
<dbReference type="IntAct" id="Q57839">
    <property type="interactions" value="1"/>
</dbReference>
<dbReference type="STRING" id="243232.MJ_0396"/>
<dbReference type="PaxDb" id="243232-MJ_0396"/>
<dbReference type="EnsemblBacteria" id="AAB98386">
    <property type="protein sequence ID" value="AAB98386"/>
    <property type="gene ID" value="MJ_0396"/>
</dbReference>
<dbReference type="GeneID" id="1451253"/>
<dbReference type="KEGG" id="mja:MJ_0396"/>
<dbReference type="eggNOG" id="arCOG04077">
    <property type="taxonomic scope" value="Archaea"/>
</dbReference>
<dbReference type="HOGENOM" id="CLU_199467_0_0_2"/>
<dbReference type="InParanoid" id="Q57839"/>
<dbReference type="OrthoDB" id="275101at2157"/>
<dbReference type="PhylomeDB" id="Q57839"/>
<dbReference type="EvolutionaryTrace" id="Q57839"/>
<dbReference type="Proteomes" id="UP000000805">
    <property type="component" value="Chromosome"/>
</dbReference>
<dbReference type="GO" id="GO:0008270">
    <property type="term" value="F:zinc ion binding"/>
    <property type="evidence" value="ECO:0007669"/>
    <property type="project" value="UniProtKB-UniRule"/>
</dbReference>
<dbReference type="GO" id="GO:0006355">
    <property type="term" value="P:regulation of DNA-templated transcription"/>
    <property type="evidence" value="ECO:0007669"/>
    <property type="project" value="UniProtKB-UniRule"/>
</dbReference>
<dbReference type="Gene3D" id="2.20.28.90">
    <property type="match status" value="1"/>
</dbReference>
<dbReference type="HAMAP" id="MF_00949">
    <property type="entry name" value="Spt4_arch"/>
    <property type="match status" value="1"/>
</dbReference>
<dbReference type="InterPro" id="IPR029040">
    <property type="entry name" value="RPABC4/Spt4"/>
</dbReference>
<dbReference type="InterPro" id="IPR022800">
    <property type="entry name" value="Spt4/RpoE2_Znf"/>
</dbReference>
<dbReference type="InterPro" id="IPR007178">
    <property type="entry name" value="Spt4_arch"/>
</dbReference>
<dbReference type="InterPro" id="IPR038589">
    <property type="entry name" value="Spt4_dom_sf"/>
</dbReference>
<dbReference type="NCBIfam" id="NF041664">
    <property type="entry name" value="RNAP_arch_Epp"/>
    <property type="match status" value="1"/>
</dbReference>
<dbReference type="PANTHER" id="PTHR40704">
    <property type="entry name" value="TRANSCRIPTION ELONGATION FACTOR SPT4"/>
    <property type="match status" value="1"/>
</dbReference>
<dbReference type="PANTHER" id="PTHR40704:SF1">
    <property type="entry name" value="TRANSCRIPTION ELONGATION FACTOR SPT4"/>
    <property type="match status" value="1"/>
</dbReference>
<dbReference type="Pfam" id="PF06093">
    <property type="entry name" value="Spt4"/>
    <property type="match status" value="1"/>
</dbReference>
<dbReference type="SMART" id="SM01389">
    <property type="entry name" value="Spt4"/>
    <property type="match status" value="1"/>
</dbReference>
<dbReference type="SUPFAM" id="SSF63393">
    <property type="entry name" value="RNA polymerase subunits"/>
    <property type="match status" value="1"/>
</dbReference>
<organism>
    <name type="scientific">Methanocaldococcus jannaschii (strain ATCC 43067 / DSM 2661 / JAL-1 / JCM 10045 / NBRC 100440)</name>
    <name type="common">Methanococcus jannaschii</name>
    <dbReference type="NCBI Taxonomy" id="243232"/>
    <lineage>
        <taxon>Archaea</taxon>
        <taxon>Methanobacteriati</taxon>
        <taxon>Methanobacteriota</taxon>
        <taxon>Methanomada group</taxon>
        <taxon>Methanococci</taxon>
        <taxon>Methanococcales</taxon>
        <taxon>Methanocaldococcaceae</taxon>
        <taxon>Methanocaldococcus</taxon>
    </lineage>
</organism>
<protein>
    <recommendedName>
        <fullName evidence="1">Transcription elongation factor Spt4</fullName>
    </recommendedName>
</protein>
<gene>
    <name evidence="1" type="primary">spt4</name>
    <name type="synonym">rpoE''</name>
    <name evidence="3" type="synonym">rpoE2</name>
    <name type="ordered locus">MJ0396</name>
</gene>